<comment type="function">
    <text evidence="1">Beta-1,3-N-acetylglucosaminyltransferase that plays a role in the elongation of specific branch structures of multiantennary N-glycans. Has strong activity towards tetraantennary N-glycans and 2,6 triantennary glycans (By similarity).</text>
</comment>
<comment type="pathway">
    <text evidence="6">Protein modification; protein glycosylation.</text>
</comment>
<comment type="subunit">
    <text evidence="5">Interacts with B3GNT2; this interaction greatly increases B3GNT2 catalytic activity, independently of B3GNT8 enzymatic activity.</text>
</comment>
<comment type="subcellular location">
    <subcellularLocation>
        <location evidence="2">Golgi apparatus membrane</location>
        <topology evidence="2">Single-pass type II membrane protein</topology>
    </subcellularLocation>
</comment>
<comment type="similarity">
    <text evidence="3">Belongs to the glycosyltransferase 31 family.</text>
</comment>
<protein>
    <recommendedName>
        <fullName>UDP-GlcNAc:betaGal beta-1,3-N-acetylglucosaminyltransferase 8</fullName>
        <shortName>BGnT-8</shortName>
        <shortName>Beta-1,3-Gn-T8</shortName>
        <shortName>Beta-1,3-N-acetylglucosaminyltransferase 8</shortName>
        <shortName>Beta3Gn-T8</shortName>
        <ecNumber>2.4.1.-</ecNumber>
    </recommendedName>
</protein>
<feature type="chain" id="PRO_0000306382" description="UDP-GlcNAc:betaGal beta-1,3-N-acetylglucosaminyltransferase 8">
    <location>
        <begin position="1"/>
        <end position="389"/>
    </location>
</feature>
<feature type="topological domain" description="Cytoplasmic" evidence="3">
    <location>
        <begin position="1"/>
        <end position="7"/>
    </location>
</feature>
<feature type="transmembrane region" description="Helical; Signal-anchor for type II membrane protein" evidence="3">
    <location>
        <begin position="8"/>
        <end position="24"/>
    </location>
</feature>
<feature type="topological domain" description="Lumenal" evidence="3">
    <location>
        <begin position="25"/>
        <end position="389"/>
    </location>
</feature>
<feature type="region of interest" description="Disordered" evidence="4">
    <location>
        <begin position="36"/>
        <end position="57"/>
    </location>
</feature>
<feature type="glycosylation site" description="N-linked (GlcNAc...) asparagine" evidence="3">
    <location>
        <position position="55"/>
    </location>
</feature>
<feature type="glycosylation site" description="N-linked (GlcNAc...) asparagine" evidence="3">
    <location>
        <position position="212"/>
    </location>
</feature>
<gene>
    <name evidence="10" type="primary">B3gnt8</name>
    <name evidence="10" type="synonym">B3galt7</name>
</gene>
<sequence length="389" mass="43370">MRCRKCQLCLSALLTLLGLKVYIEWTSESWLKKAEPRGALPSPTPPNAEPTLPTNLSARLGQTGPLSSAYWNQQQRQLGVLPSTDCQTWGTVAASEILDFILYPQELRRFLLSAACRSFPLWLPAGEGSPVASCSDKDVPYLLLAVKSEPGHFAARQAVRETWGSPVAGTRLLFLLGSPLGMGGPDLRSLVTWESRRYGDLLLWDFLDVPYNRTLKDLLLLTWLSHHCPDVNFVLQVQDDAFVHIPALLEHLQTLPPTWARSLYLGEIFTQAKPLRKPGGPFYVPKTFFEGDYPAYASGGGYVISGRLAPWLLQAAARVAPFPFDDVYTGFCFRALGLAPRAHPGFLTAWPAERTRDPCAVRGLLLVHPVSPQDTIWLWRHLWVPELQC</sequence>
<proteinExistence type="evidence at protein level"/>
<name>B3GN8_MOUSE</name>
<evidence type="ECO:0000250" key="1">
    <source>
        <dbReference type="UniProtKB" id="Q7Z7M8"/>
    </source>
</evidence>
<evidence type="ECO:0000250" key="2">
    <source>
        <dbReference type="UniProtKB" id="Q9NY97"/>
    </source>
</evidence>
<evidence type="ECO:0000255" key="3"/>
<evidence type="ECO:0000256" key="4">
    <source>
        <dbReference type="SAM" id="MobiDB-lite"/>
    </source>
</evidence>
<evidence type="ECO:0000269" key="5">
    <source>
    </source>
</evidence>
<evidence type="ECO:0000305" key="6"/>
<evidence type="ECO:0000312" key="7">
    <source>
        <dbReference type="EMBL" id="AAH25206.1"/>
    </source>
</evidence>
<evidence type="ECO:0000312" key="8">
    <source>
        <dbReference type="EMBL" id="BAC31246.1"/>
    </source>
</evidence>
<evidence type="ECO:0000312" key="9">
    <source>
        <dbReference type="EMBL" id="BAE32443.1"/>
    </source>
</evidence>
<evidence type="ECO:0000312" key="10">
    <source>
        <dbReference type="MGI" id="MGI:2385269"/>
    </source>
</evidence>
<accession>Q8R3I9</accession>
<reference evidence="8" key="1">
    <citation type="journal article" date="2005" name="Science">
        <title>The transcriptional landscape of the mammalian genome.</title>
        <authorList>
            <person name="Carninci P."/>
            <person name="Kasukawa T."/>
            <person name="Katayama S."/>
            <person name="Gough J."/>
            <person name="Frith M.C."/>
            <person name="Maeda N."/>
            <person name="Oyama R."/>
            <person name="Ravasi T."/>
            <person name="Lenhard B."/>
            <person name="Wells C."/>
            <person name="Kodzius R."/>
            <person name="Shimokawa K."/>
            <person name="Bajic V.B."/>
            <person name="Brenner S.E."/>
            <person name="Batalov S."/>
            <person name="Forrest A.R."/>
            <person name="Zavolan M."/>
            <person name="Davis M.J."/>
            <person name="Wilming L.G."/>
            <person name="Aidinis V."/>
            <person name="Allen J.E."/>
            <person name="Ambesi-Impiombato A."/>
            <person name="Apweiler R."/>
            <person name="Aturaliya R.N."/>
            <person name="Bailey T.L."/>
            <person name="Bansal M."/>
            <person name="Baxter L."/>
            <person name="Beisel K.W."/>
            <person name="Bersano T."/>
            <person name="Bono H."/>
            <person name="Chalk A.M."/>
            <person name="Chiu K.P."/>
            <person name="Choudhary V."/>
            <person name="Christoffels A."/>
            <person name="Clutterbuck D.R."/>
            <person name="Crowe M.L."/>
            <person name="Dalla E."/>
            <person name="Dalrymple B.P."/>
            <person name="de Bono B."/>
            <person name="Della Gatta G."/>
            <person name="di Bernardo D."/>
            <person name="Down T."/>
            <person name="Engstrom P."/>
            <person name="Fagiolini M."/>
            <person name="Faulkner G."/>
            <person name="Fletcher C.F."/>
            <person name="Fukushima T."/>
            <person name="Furuno M."/>
            <person name="Futaki S."/>
            <person name="Gariboldi M."/>
            <person name="Georgii-Hemming P."/>
            <person name="Gingeras T.R."/>
            <person name="Gojobori T."/>
            <person name="Green R.E."/>
            <person name="Gustincich S."/>
            <person name="Harbers M."/>
            <person name="Hayashi Y."/>
            <person name="Hensch T.K."/>
            <person name="Hirokawa N."/>
            <person name="Hill D."/>
            <person name="Huminiecki L."/>
            <person name="Iacono M."/>
            <person name="Ikeo K."/>
            <person name="Iwama A."/>
            <person name="Ishikawa T."/>
            <person name="Jakt M."/>
            <person name="Kanapin A."/>
            <person name="Katoh M."/>
            <person name="Kawasawa Y."/>
            <person name="Kelso J."/>
            <person name="Kitamura H."/>
            <person name="Kitano H."/>
            <person name="Kollias G."/>
            <person name="Krishnan S.P."/>
            <person name="Kruger A."/>
            <person name="Kummerfeld S.K."/>
            <person name="Kurochkin I.V."/>
            <person name="Lareau L.F."/>
            <person name="Lazarevic D."/>
            <person name="Lipovich L."/>
            <person name="Liu J."/>
            <person name="Liuni S."/>
            <person name="McWilliam S."/>
            <person name="Madan Babu M."/>
            <person name="Madera M."/>
            <person name="Marchionni L."/>
            <person name="Matsuda H."/>
            <person name="Matsuzawa S."/>
            <person name="Miki H."/>
            <person name="Mignone F."/>
            <person name="Miyake S."/>
            <person name="Morris K."/>
            <person name="Mottagui-Tabar S."/>
            <person name="Mulder N."/>
            <person name="Nakano N."/>
            <person name="Nakauchi H."/>
            <person name="Ng P."/>
            <person name="Nilsson R."/>
            <person name="Nishiguchi S."/>
            <person name="Nishikawa S."/>
            <person name="Nori F."/>
            <person name="Ohara O."/>
            <person name="Okazaki Y."/>
            <person name="Orlando V."/>
            <person name="Pang K.C."/>
            <person name="Pavan W.J."/>
            <person name="Pavesi G."/>
            <person name="Pesole G."/>
            <person name="Petrovsky N."/>
            <person name="Piazza S."/>
            <person name="Reed J."/>
            <person name="Reid J.F."/>
            <person name="Ring B.Z."/>
            <person name="Ringwald M."/>
            <person name="Rost B."/>
            <person name="Ruan Y."/>
            <person name="Salzberg S.L."/>
            <person name="Sandelin A."/>
            <person name="Schneider C."/>
            <person name="Schoenbach C."/>
            <person name="Sekiguchi K."/>
            <person name="Semple C.A."/>
            <person name="Seno S."/>
            <person name="Sessa L."/>
            <person name="Sheng Y."/>
            <person name="Shibata Y."/>
            <person name="Shimada H."/>
            <person name="Shimada K."/>
            <person name="Silva D."/>
            <person name="Sinclair B."/>
            <person name="Sperling S."/>
            <person name="Stupka E."/>
            <person name="Sugiura K."/>
            <person name="Sultana R."/>
            <person name="Takenaka Y."/>
            <person name="Taki K."/>
            <person name="Tammoja K."/>
            <person name="Tan S.L."/>
            <person name="Tang S."/>
            <person name="Taylor M.S."/>
            <person name="Tegner J."/>
            <person name="Teichmann S.A."/>
            <person name="Ueda H.R."/>
            <person name="van Nimwegen E."/>
            <person name="Verardo R."/>
            <person name="Wei C.L."/>
            <person name="Yagi K."/>
            <person name="Yamanishi H."/>
            <person name="Zabarovsky E."/>
            <person name="Zhu S."/>
            <person name="Zimmer A."/>
            <person name="Hide W."/>
            <person name="Bult C."/>
            <person name="Grimmond S.M."/>
            <person name="Teasdale R.D."/>
            <person name="Liu E.T."/>
            <person name="Brusic V."/>
            <person name="Quackenbush J."/>
            <person name="Wahlestedt C."/>
            <person name="Mattick J.S."/>
            <person name="Hume D.A."/>
            <person name="Kai C."/>
            <person name="Sasaki D."/>
            <person name="Tomaru Y."/>
            <person name="Fukuda S."/>
            <person name="Kanamori-Katayama M."/>
            <person name="Suzuki M."/>
            <person name="Aoki J."/>
            <person name="Arakawa T."/>
            <person name="Iida J."/>
            <person name="Imamura K."/>
            <person name="Itoh M."/>
            <person name="Kato T."/>
            <person name="Kawaji H."/>
            <person name="Kawagashira N."/>
            <person name="Kawashima T."/>
            <person name="Kojima M."/>
            <person name="Kondo S."/>
            <person name="Konno H."/>
            <person name="Nakano K."/>
            <person name="Ninomiya N."/>
            <person name="Nishio T."/>
            <person name="Okada M."/>
            <person name="Plessy C."/>
            <person name="Shibata K."/>
            <person name="Shiraki T."/>
            <person name="Suzuki S."/>
            <person name="Tagami M."/>
            <person name="Waki K."/>
            <person name="Watahiki A."/>
            <person name="Okamura-Oho Y."/>
            <person name="Suzuki H."/>
            <person name="Kawai J."/>
            <person name="Hayashizaki Y."/>
        </authorList>
    </citation>
    <scope>NUCLEOTIDE SEQUENCE [LARGE SCALE MRNA]</scope>
    <source>
        <strain evidence="8">C57BL/6J</strain>
        <strain evidence="9">NOD</strain>
        <tissue evidence="9">Dendritic cell</tissue>
        <tissue evidence="8">Thymus</tissue>
    </source>
</reference>
<reference evidence="7" key="2">
    <citation type="journal article" date="2004" name="Genome Res.">
        <title>The status, quality, and expansion of the NIH full-length cDNA project: the Mammalian Gene Collection (MGC).</title>
        <authorList>
            <consortium name="The MGC Project Team"/>
        </authorList>
    </citation>
    <scope>NUCLEOTIDE SEQUENCE [LARGE SCALE MRNA]</scope>
    <source>
        <strain evidence="7">Czech II</strain>
        <tissue evidence="7">Mammary tumor</tissue>
    </source>
</reference>
<reference key="3">
    <citation type="journal article" date="2008" name="J. Biol. Chem.">
        <title>Activation of beta1,3-N-acetylglucosaminyltransferase-2 (beta3Gn-T2) by beta3Gn-T8. Possible involvement of beta3Gn-T8 in increasing poly-N-acetyllactosamine chains in differentiated HL-60 cells.</title>
        <authorList>
            <person name="Seko A."/>
            <person name="Yamashita K."/>
        </authorList>
    </citation>
    <scope>INTERACTION WITH B3GNT2</scope>
</reference>
<dbReference type="EC" id="2.4.1.-"/>
<dbReference type="EMBL" id="AK042388">
    <property type="protein sequence ID" value="BAC31246.1"/>
    <property type="molecule type" value="mRNA"/>
</dbReference>
<dbReference type="EMBL" id="AK154220">
    <property type="protein sequence ID" value="BAE32443.1"/>
    <property type="molecule type" value="mRNA"/>
</dbReference>
<dbReference type="EMBL" id="AK154901">
    <property type="protein sequence ID" value="BAE32912.1"/>
    <property type="molecule type" value="mRNA"/>
</dbReference>
<dbReference type="EMBL" id="BC025206">
    <property type="protein sequence ID" value="AAH25206.1"/>
    <property type="molecule type" value="mRNA"/>
</dbReference>
<dbReference type="CCDS" id="CCDS20989.1"/>
<dbReference type="RefSeq" id="NP_001031817.1">
    <property type="nucleotide sequence ID" value="NM_001036740.2"/>
</dbReference>
<dbReference type="RefSeq" id="NP_666296.1">
    <property type="nucleotide sequence ID" value="NM_146184.4"/>
</dbReference>
<dbReference type="RefSeq" id="XP_006539916.1">
    <property type="nucleotide sequence ID" value="XM_006539853.4"/>
</dbReference>
<dbReference type="SMR" id="Q8R3I9"/>
<dbReference type="FunCoup" id="Q8R3I9">
    <property type="interactions" value="64"/>
</dbReference>
<dbReference type="IntAct" id="Q8R3I9">
    <property type="interactions" value="2"/>
</dbReference>
<dbReference type="STRING" id="10090.ENSMUSP00000092277"/>
<dbReference type="CAZy" id="GT31">
    <property type="family name" value="Glycosyltransferase Family 31"/>
</dbReference>
<dbReference type="GlyCosmos" id="Q8R3I9">
    <property type="glycosylation" value="2 sites, No reported glycans"/>
</dbReference>
<dbReference type="GlyGen" id="Q8R3I9">
    <property type="glycosylation" value="3 sites"/>
</dbReference>
<dbReference type="PhosphoSitePlus" id="Q8R3I9"/>
<dbReference type="PaxDb" id="10090-ENSMUSP00000092277"/>
<dbReference type="ProteomicsDB" id="277168"/>
<dbReference type="Antibodypedia" id="70706">
    <property type="antibodies" value="11 antibodies from 8 providers"/>
</dbReference>
<dbReference type="DNASU" id="232984"/>
<dbReference type="Ensembl" id="ENSMUST00000076034.8">
    <property type="protein sequence ID" value="ENSMUSP00000092277.5"/>
    <property type="gene ID" value="ENSMUSG00000059479.8"/>
</dbReference>
<dbReference type="Ensembl" id="ENSMUST00000206940.2">
    <property type="protein sequence ID" value="ENSMUSP00000145797.2"/>
    <property type="gene ID" value="ENSMUSG00000059479.8"/>
</dbReference>
<dbReference type="GeneID" id="232984"/>
<dbReference type="KEGG" id="mmu:232984"/>
<dbReference type="UCSC" id="uc009ftg.1">
    <property type="organism name" value="mouse"/>
</dbReference>
<dbReference type="AGR" id="MGI:2385269"/>
<dbReference type="CTD" id="374907"/>
<dbReference type="MGI" id="MGI:2385269">
    <property type="gene designation" value="B3gnt8"/>
</dbReference>
<dbReference type="VEuPathDB" id="HostDB:ENSMUSG00000059479"/>
<dbReference type="eggNOG" id="KOG2287">
    <property type="taxonomic scope" value="Eukaryota"/>
</dbReference>
<dbReference type="GeneTree" id="ENSGT00940000161895"/>
<dbReference type="HOGENOM" id="CLU_036849_5_0_1"/>
<dbReference type="InParanoid" id="Q8R3I9"/>
<dbReference type="OMA" id="GHHCPDV"/>
<dbReference type="OrthoDB" id="5957813at2759"/>
<dbReference type="PhylomeDB" id="Q8R3I9"/>
<dbReference type="TreeFam" id="TF318639"/>
<dbReference type="Reactome" id="R-MMU-913709">
    <property type="pathway name" value="O-linked glycosylation of mucins"/>
</dbReference>
<dbReference type="UniPathway" id="UPA00378"/>
<dbReference type="BioGRID-ORCS" id="232984">
    <property type="hits" value="5 hits in 76 CRISPR screens"/>
</dbReference>
<dbReference type="PRO" id="PR:Q8R3I9"/>
<dbReference type="Proteomes" id="UP000000589">
    <property type="component" value="Chromosome 7"/>
</dbReference>
<dbReference type="RNAct" id="Q8R3I9">
    <property type="molecule type" value="protein"/>
</dbReference>
<dbReference type="Bgee" id="ENSMUSG00000059479">
    <property type="expression patterns" value="Expressed in lumbar dorsal root ganglion and 93 other cell types or tissues"/>
</dbReference>
<dbReference type="ExpressionAtlas" id="Q8R3I9">
    <property type="expression patterns" value="baseline and differential"/>
</dbReference>
<dbReference type="GO" id="GO:0000139">
    <property type="term" value="C:Golgi membrane"/>
    <property type="evidence" value="ECO:0007669"/>
    <property type="project" value="UniProtKB-SubCell"/>
</dbReference>
<dbReference type="GO" id="GO:0016262">
    <property type="term" value="F:protein N-acetylglucosaminyltransferase activity"/>
    <property type="evidence" value="ECO:0000250"/>
    <property type="project" value="HGNC-UCL"/>
</dbReference>
<dbReference type="GO" id="GO:0030311">
    <property type="term" value="P:poly-N-acetyllactosamine biosynthetic process"/>
    <property type="evidence" value="ECO:0000250"/>
    <property type="project" value="HGNC-UCL"/>
</dbReference>
<dbReference type="GO" id="GO:0006486">
    <property type="term" value="P:protein glycosylation"/>
    <property type="evidence" value="ECO:0007669"/>
    <property type="project" value="UniProtKB-UniPathway"/>
</dbReference>
<dbReference type="FunFam" id="3.90.550.50:FF:000024">
    <property type="entry name" value="Hexosyltransferase"/>
    <property type="match status" value="1"/>
</dbReference>
<dbReference type="Gene3D" id="3.90.550.50">
    <property type="match status" value="1"/>
</dbReference>
<dbReference type="InterPro" id="IPR002659">
    <property type="entry name" value="Glyco_trans_31"/>
</dbReference>
<dbReference type="PANTHER" id="PTHR11214">
    <property type="entry name" value="BETA-1,3-N-ACETYLGLUCOSAMINYLTRANSFERASE"/>
    <property type="match status" value="1"/>
</dbReference>
<dbReference type="PANTHER" id="PTHR11214:SF87">
    <property type="entry name" value="UDP-GLCNAC:BETAGAL BETA-1,3-N-ACETYLGLUCOSAMINYLTRANSFERASE 8"/>
    <property type="match status" value="1"/>
</dbReference>
<dbReference type="Pfam" id="PF01762">
    <property type="entry name" value="Galactosyl_T"/>
    <property type="match status" value="1"/>
</dbReference>
<organism>
    <name type="scientific">Mus musculus</name>
    <name type="common">Mouse</name>
    <dbReference type="NCBI Taxonomy" id="10090"/>
    <lineage>
        <taxon>Eukaryota</taxon>
        <taxon>Metazoa</taxon>
        <taxon>Chordata</taxon>
        <taxon>Craniata</taxon>
        <taxon>Vertebrata</taxon>
        <taxon>Euteleostomi</taxon>
        <taxon>Mammalia</taxon>
        <taxon>Eutheria</taxon>
        <taxon>Euarchontoglires</taxon>
        <taxon>Glires</taxon>
        <taxon>Rodentia</taxon>
        <taxon>Myomorpha</taxon>
        <taxon>Muroidea</taxon>
        <taxon>Muridae</taxon>
        <taxon>Murinae</taxon>
        <taxon>Mus</taxon>
        <taxon>Mus</taxon>
    </lineage>
</organism>
<keyword id="KW-0325">Glycoprotein</keyword>
<keyword id="KW-0328">Glycosyltransferase</keyword>
<keyword id="KW-0333">Golgi apparatus</keyword>
<keyword id="KW-0472">Membrane</keyword>
<keyword id="KW-1185">Reference proteome</keyword>
<keyword id="KW-0735">Signal-anchor</keyword>
<keyword id="KW-0808">Transferase</keyword>
<keyword id="KW-0812">Transmembrane</keyword>
<keyword id="KW-1133">Transmembrane helix</keyword>